<name>ARAG_RHIEC</name>
<dbReference type="EC" id="7.5.2.12" evidence="1"/>
<dbReference type="EMBL" id="CP000133">
    <property type="protein sequence ID" value="ABC92449.1"/>
    <property type="molecule type" value="Genomic_DNA"/>
</dbReference>
<dbReference type="RefSeq" id="WP_011426906.1">
    <property type="nucleotide sequence ID" value="NC_007761.1"/>
</dbReference>
<dbReference type="SMR" id="Q2K3Y7"/>
<dbReference type="KEGG" id="ret:RHE_CH03694"/>
<dbReference type="eggNOG" id="COG1129">
    <property type="taxonomic scope" value="Bacteria"/>
</dbReference>
<dbReference type="HOGENOM" id="CLU_000604_92_3_5"/>
<dbReference type="OrthoDB" id="9805029at2"/>
<dbReference type="Proteomes" id="UP000001936">
    <property type="component" value="Chromosome"/>
</dbReference>
<dbReference type="GO" id="GO:0005886">
    <property type="term" value="C:plasma membrane"/>
    <property type="evidence" value="ECO:0007669"/>
    <property type="project" value="UniProtKB-SubCell"/>
</dbReference>
<dbReference type="GO" id="GO:0015612">
    <property type="term" value="F:ABC-type L-arabinose transporter activity"/>
    <property type="evidence" value="ECO:0007669"/>
    <property type="project" value="UniProtKB-EC"/>
</dbReference>
<dbReference type="GO" id="GO:0005524">
    <property type="term" value="F:ATP binding"/>
    <property type="evidence" value="ECO:0007669"/>
    <property type="project" value="UniProtKB-KW"/>
</dbReference>
<dbReference type="GO" id="GO:0016887">
    <property type="term" value="F:ATP hydrolysis activity"/>
    <property type="evidence" value="ECO:0007669"/>
    <property type="project" value="InterPro"/>
</dbReference>
<dbReference type="CDD" id="cd03216">
    <property type="entry name" value="ABC_Carb_Monos_I"/>
    <property type="match status" value="1"/>
</dbReference>
<dbReference type="CDD" id="cd03215">
    <property type="entry name" value="ABC_Carb_Monos_II"/>
    <property type="match status" value="1"/>
</dbReference>
<dbReference type="FunFam" id="3.40.50.300:FF:000126">
    <property type="entry name" value="Galactose/methyl galactoside import ATP-binding protein MglA"/>
    <property type="match status" value="1"/>
</dbReference>
<dbReference type="FunFam" id="3.40.50.300:FF:000127">
    <property type="entry name" value="Ribose import ATP-binding protein RbsA"/>
    <property type="match status" value="1"/>
</dbReference>
<dbReference type="Gene3D" id="3.40.50.300">
    <property type="entry name" value="P-loop containing nucleotide triphosphate hydrolases"/>
    <property type="match status" value="2"/>
</dbReference>
<dbReference type="InterPro" id="IPR003593">
    <property type="entry name" value="AAA+_ATPase"/>
</dbReference>
<dbReference type="InterPro" id="IPR050107">
    <property type="entry name" value="ABC_carbohydrate_import_ATPase"/>
</dbReference>
<dbReference type="InterPro" id="IPR003439">
    <property type="entry name" value="ABC_transporter-like_ATP-bd"/>
</dbReference>
<dbReference type="InterPro" id="IPR017871">
    <property type="entry name" value="ABC_transporter-like_CS"/>
</dbReference>
<dbReference type="InterPro" id="IPR027417">
    <property type="entry name" value="P-loop_NTPase"/>
</dbReference>
<dbReference type="NCBIfam" id="NF008442">
    <property type="entry name" value="PRK11288.1"/>
    <property type="match status" value="1"/>
</dbReference>
<dbReference type="PANTHER" id="PTHR43790:SF6">
    <property type="entry name" value="ARABINOSE IMPORT ATP-BINDING PROTEIN ARAG"/>
    <property type="match status" value="1"/>
</dbReference>
<dbReference type="PANTHER" id="PTHR43790">
    <property type="entry name" value="CARBOHYDRATE TRANSPORT ATP-BINDING PROTEIN MG119-RELATED"/>
    <property type="match status" value="1"/>
</dbReference>
<dbReference type="Pfam" id="PF00005">
    <property type="entry name" value="ABC_tran"/>
    <property type="match status" value="2"/>
</dbReference>
<dbReference type="SMART" id="SM00382">
    <property type="entry name" value="AAA"/>
    <property type="match status" value="2"/>
</dbReference>
<dbReference type="SUPFAM" id="SSF52540">
    <property type="entry name" value="P-loop containing nucleoside triphosphate hydrolases"/>
    <property type="match status" value="2"/>
</dbReference>
<dbReference type="PROSITE" id="PS00211">
    <property type="entry name" value="ABC_TRANSPORTER_1"/>
    <property type="match status" value="1"/>
</dbReference>
<dbReference type="PROSITE" id="PS50893">
    <property type="entry name" value="ABC_TRANSPORTER_2"/>
    <property type="match status" value="2"/>
</dbReference>
<dbReference type="PROSITE" id="PS51268">
    <property type="entry name" value="ARAG"/>
    <property type="match status" value="1"/>
</dbReference>
<comment type="function">
    <text evidence="1">Part of the ABC transporter complex AraFGH involved in arabinose import. Responsible for energy coupling to the transport system.</text>
</comment>
<comment type="catalytic activity">
    <reaction evidence="1">
        <text>L-arabinose(out) + ATP + H2O = L-arabinose(in) + ADP + phosphate + H(+)</text>
        <dbReference type="Rhea" id="RHEA:30007"/>
        <dbReference type="ChEBI" id="CHEBI:15377"/>
        <dbReference type="ChEBI" id="CHEBI:15378"/>
        <dbReference type="ChEBI" id="CHEBI:17535"/>
        <dbReference type="ChEBI" id="CHEBI:30616"/>
        <dbReference type="ChEBI" id="CHEBI:43474"/>
        <dbReference type="ChEBI" id="CHEBI:456216"/>
        <dbReference type="EC" id="7.5.2.12"/>
    </reaction>
</comment>
<comment type="subunit">
    <text evidence="1">The complex is composed of two ATP-binding proteins (AraG), two transmembrane proteins (AraH) and a solute-binding protein (AraF).</text>
</comment>
<comment type="subcellular location">
    <subcellularLocation>
        <location evidence="1">Cell inner membrane</location>
        <topology evidence="1">Peripheral membrane protein</topology>
    </subcellularLocation>
</comment>
<comment type="similarity">
    <text evidence="1">Belongs to the ABC transporter superfamily. Arabinose importer (TC 3.A.1.2.2) family.</text>
</comment>
<protein>
    <recommendedName>
        <fullName evidence="1">Arabinose import ATP-binding protein AraG</fullName>
        <ecNumber evidence="1">7.5.2.12</ecNumber>
    </recommendedName>
</protein>
<feature type="chain" id="PRO_0000270475" description="Arabinose import ATP-binding protein AraG">
    <location>
        <begin position="1"/>
        <end position="501"/>
    </location>
</feature>
<feature type="domain" description="ABC transporter 1" evidence="1">
    <location>
        <begin position="4"/>
        <end position="239"/>
    </location>
</feature>
<feature type="domain" description="ABC transporter 2" evidence="1">
    <location>
        <begin position="252"/>
        <end position="495"/>
    </location>
</feature>
<feature type="binding site" evidence="1">
    <location>
        <begin position="36"/>
        <end position="43"/>
    </location>
    <ligand>
        <name>ATP</name>
        <dbReference type="ChEBI" id="CHEBI:30616"/>
    </ligand>
</feature>
<sequence length="501" mass="54502">MAFLEFNNVSKGYPGVQALANVSFTVEKGVVHGLMGENGAGKSTLIRVLSGDQAADGGNIFIDGEEQKYTSVRDAFHAGIVVIHQELQLVPELTVAENLWLGRFPAKGGIIHLKTLIETVRAKLEEIGIDVDPSTKVSSLSIGARQMIEIAKAVMLDARVIALDEPTSSLSSRESEILFSLIARLKARGAVILYVSHRLDEIFRLCDSLTVLRDGKLAAHHPKIAETTREQIISEMVGREISNVWGWRERALGDNRLEVKGLSGPRLHTPISFSVRQGEILGFFGLIGAGRSEMARLLYGADARHRGEVTIDGVAVSPNNPKVAIKAGMVLCPEDRKFDGIVQGRSIEENIAISSRRHFSRFGILKPKTEAAQADRFIAKLRVRTPSRRQDIVNLSGGNQQKVILGRWLSEQGIKVLVIDEPTRGIDVGAKSEIYDILYELAAGGVAIVVISSELPEVMGICDRIIVMCQGRVAANVARPDFDERSILTAALPDKNAAGSI</sequence>
<evidence type="ECO:0000255" key="1">
    <source>
        <dbReference type="HAMAP-Rule" id="MF_01721"/>
    </source>
</evidence>
<reference key="1">
    <citation type="journal article" date="2006" name="Proc. Natl. Acad. Sci. U.S.A.">
        <title>The partitioned Rhizobium etli genome: genetic and metabolic redundancy in seven interacting replicons.</title>
        <authorList>
            <person name="Gonzalez V."/>
            <person name="Santamaria R.I."/>
            <person name="Bustos P."/>
            <person name="Hernandez-Gonzalez I."/>
            <person name="Medrano-Soto A."/>
            <person name="Moreno-Hagelsieb G."/>
            <person name="Janga S.C."/>
            <person name="Ramirez M.A."/>
            <person name="Jimenez-Jacinto V."/>
            <person name="Collado-Vides J."/>
            <person name="Davila G."/>
        </authorList>
    </citation>
    <scope>NUCLEOTIDE SEQUENCE [LARGE SCALE GENOMIC DNA]</scope>
    <source>
        <strain>ATCC 51251 / DSM 11541 / JCM 21823 / NBRC 15573 / CFN 42</strain>
    </source>
</reference>
<organism>
    <name type="scientific">Rhizobium etli (strain ATCC 51251 / DSM 11541 / JCM 21823 / NBRC 15573 / CFN 42)</name>
    <dbReference type="NCBI Taxonomy" id="347834"/>
    <lineage>
        <taxon>Bacteria</taxon>
        <taxon>Pseudomonadati</taxon>
        <taxon>Pseudomonadota</taxon>
        <taxon>Alphaproteobacteria</taxon>
        <taxon>Hyphomicrobiales</taxon>
        <taxon>Rhizobiaceae</taxon>
        <taxon>Rhizobium/Agrobacterium group</taxon>
        <taxon>Rhizobium</taxon>
    </lineage>
</organism>
<proteinExistence type="inferred from homology"/>
<accession>Q2K3Y7</accession>
<gene>
    <name evidence="1" type="primary">araG</name>
    <name type="ordered locus">RHE_CH03694</name>
</gene>
<keyword id="KW-0067">ATP-binding</keyword>
<keyword id="KW-0997">Cell inner membrane</keyword>
<keyword id="KW-1003">Cell membrane</keyword>
<keyword id="KW-0472">Membrane</keyword>
<keyword id="KW-0547">Nucleotide-binding</keyword>
<keyword id="KW-1185">Reference proteome</keyword>
<keyword id="KW-0677">Repeat</keyword>
<keyword id="KW-0762">Sugar transport</keyword>
<keyword id="KW-1278">Translocase</keyword>
<keyword id="KW-0813">Transport</keyword>